<dbReference type="EC" id="7.-.-.-" evidence="1"/>
<dbReference type="EMBL" id="CP000668">
    <property type="protein sequence ID" value="ABP39295.1"/>
    <property type="molecule type" value="Genomic_DNA"/>
</dbReference>
<dbReference type="RefSeq" id="WP_002210601.1">
    <property type="nucleotide sequence ID" value="NZ_CP009715.1"/>
</dbReference>
<dbReference type="SMR" id="A4TJ33"/>
<dbReference type="KEGG" id="ypp:YPDSF_0895"/>
<dbReference type="PATRIC" id="fig|386656.14.peg.2958"/>
<dbReference type="GO" id="GO:0005886">
    <property type="term" value="C:plasma membrane"/>
    <property type="evidence" value="ECO:0007669"/>
    <property type="project" value="UniProtKB-SubCell"/>
</dbReference>
<dbReference type="GO" id="GO:0022900">
    <property type="term" value="P:electron transport chain"/>
    <property type="evidence" value="ECO:0007669"/>
    <property type="project" value="UniProtKB-UniRule"/>
</dbReference>
<dbReference type="HAMAP" id="MF_00478">
    <property type="entry name" value="RsxE_RnfE"/>
    <property type="match status" value="1"/>
</dbReference>
<dbReference type="InterPro" id="IPR003667">
    <property type="entry name" value="NqrDE/RnfAE"/>
</dbReference>
<dbReference type="InterPro" id="IPR010968">
    <property type="entry name" value="RnfE"/>
</dbReference>
<dbReference type="NCBIfam" id="NF009070">
    <property type="entry name" value="PRK12405.1"/>
    <property type="match status" value="1"/>
</dbReference>
<dbReference type="NCBIfam" id="TIGR01948">
    <property type="entry name" value="rnfE"/>
    <property type="match status" value="1"/>
</dbReference>
<dbReference type="PANTHER" id="PTHR30586">
    <property type="entry name" value="ELECTRON TRANSPORT COMPLEX PROTEIN RNFE"/>
    <property type="match status" value="1"/>
</dbReference>
<dbReference type="PANTHER" id="PTHR30586:SF0">
    <property type="entry name" value="ION-TRANSLOCATING OXIDOREDUCTASE COMPLEX SUBUNIT E"/>
    <property type="match status" value="1"/>
</dbReference>
<dbReference type="Pfam" id="PF02508">
    <property type="entry name" value="Rnf-Nqr"/>
    <property type="match status" value="1"/>
</dbReference>
<dbReference type="PIRSF" id="PIRSF006102">
    <property type="entry name" value="NQR_DE"/>
    <property type="match status" value="1"/>
</dbReference>
<keyword id="KW-0997">Cell inner membrane</keyword>
<keyword id="KW-1003">Cell membrane</keyword>
<keyword id="KW-0249">Electron transport</keyword>
<keyword id="KW-0472">Membrane</keyword>
<keyword id="KW-1278">Translocase</keyword>
<keyword id="KW-0812">Transmembrane</keyword>
<keyword id="KW-1133">Transmembrane helix</keyword>
<keyword id="KW-0813">Transport</keyword>
<reference key="1">
    <citation type="submission" date="2007-02" db="EMBL/GenBank/DDBJ databases">
        <title>Complete sequence of chromosome of Yersinia pestis Pestoides F.</title>
        <authorList>
            <consortium name="US DOE Joint Genome Institute"/>
            <person name="Copeland A."/>
            <person name="Lucas S."/>
            <person name="Lapidus A."/>
            <person name="Barry K."/>
            <person name="Detter J.C."/>
            <person name="Glavina del Rio T."/>
            <person name="Hammon N."/>
            <person name="Israni S."/>
            <person name="Dalin E."/>
            <person name="Tice H."/>
            <person name="Pitluck S."/>
            <person name="Di Bartolo G."/>
            <person name="Chain P."/>
            <person name="Malfatti S."/>
            <person name="Shin M."/>
            <person name="Vergez L."/>
            <person name="Schmutz J."/>
            <person name="Larimer F."/>
            <person name="Land M."/>
            <person name="Hauser L."/>
            <person name="Worsham P."/>
            <person name="Chu M."/>
            <person name="Bearden S."/>
            <person name="Garcia E."/>
            <person name="Richardson P."/>
        </authorList>
    </citation>
    <scope>NUCLEOTIDE SEQUENCE [LARGE SCALE GENOMIC DNA]</scope>
    <source>
        <strain>Pestoides F</strain>
    </source>
</reference>
<comment type="function">
    <text evidence="1">Part of a membrane-bound complex that couples electron transfer with translocation of ions across the membrane.</text>
</comment>
<comment type="subunit">
    <text evidence="1">The complex is composed of six subunits: RnfA, RnfB, RnfC, RnfD, RnfE and RnfG.</text>
</comment>
<comment type="subcellular location">
    <subcellularLocation>
        <location evidence="1">Cell inner membrane</location>
        <topology evidence="1">Multi-pass membrane protein</topology>
    </subcellularLocation>
</comment>
<comment type="similarity">
    <text evidence="1">Belongs to the NqrDE/RnfAE family.</text>
</comment>
<evidence type="ECO:0000255" key="1">
    <source>
        <dbReference type="HAMAP-Rule" id="MF_00478"/>
    </source>
</evidence>
<protein>
    <recommendedName>
        <fullName evidence="1">Ion-translocating oxidoreductase complex subunit E</fullName>
        <ecNumber evidence="1">7.-.-.-</ecNumber>
    </recommendedName>
    <alternativeName>
        <fullName evidence="1">Rnf electron transport complex subunit E</fullName>
    </alternativeName>
</protein>
<feature type="chain" id="PRO_1000014117" description="Ion-translocating oxidoreductase complex subunit E">
    <location>
        <begin position="1"/>
        <end position="233"/>
    </location>
</feature>
<feature type="transmembrane region" description="Helical" evidence="1">
    <location>
        <begin position="18"/>
        <end position="38"/>
    </location>
</feature>
<feature type="transmembrane region" description="Helical" evidence="1">
    <location>
        <begin position="39"/>
        <end position="59"/>
    </location>
</feature>
<feature type="transmembrane region" description="Helical" evidence="1">
    <location>
        <begin position="69"/>
        <end position="89"/>
    </location>
</feature>
<feature type="transmembrane region" description="Helical" evidence="1">
    <location>
        <begin position="92"/>
        <end position="112"/>
    </location>
</feature>
<feature type="transmembrane region" description="Helical" evidence="1">
    <location>
        <begin position="128"/>
        <end position="148"/>
    </location>
</feature>
<feature type="transmembrane region" description="Helical" evidence="1">
    <location>
        <begin position="182"/>
        <end position="202"/>
    </location>
</feature>
<proteinExistence type="inferred from homology"/>
<name>RNFE_YERPP</name>
<sequence length="233" mass="24587">MSEAKNLLAQGLWKNNSALVQLLGLCPLLAVSSTATNALGLGLATTLVLVCTNTAVSALRRWVPSEIRIPIYVMIIASVVSTVQMLINAYAFGLYQSLGIFIPLIVTNCIVIGRAEAYAAKNPVGLSALDGFAMGMGATCALFVLGALREILGNGTLFDGADMLLGSWATVLRIDILHLDTPFLLAMLPPGAFIGLGLLLAGKYVIDEKMKARKANTRVSVPQLQDGDAEKAL</sequence>
<organism>
    <name type="scientific">Yersinia pestis (strain Pestoides F)</name>
    <dbReference type="NCBI Taxonomy" id="386656"/>
    <lineage>
        <taxon>Bacteria</taxon>
        <taxon>Pseudomonadati</taxon>
        <taxon>Pseudomonadota</taxon>
        <taxon>Gammaproteobacteria</taxon>
        <taxon>Enterobacterales</taxon>
        <taxon>Yersiniaceae</taxon>
        <taxon>Yersinia</taxon>
    </lineage>
</organism>
<accession>A4TJ33</accession>
<gene>
    <name evidence="1" type="primary">rnfE</name>
    <name type="ordered locus">YPDSF_0895</name>
</gene>